<name>ARGR_HAEIN</name>
<organism>
    <name type="scientific">Haemophilus influenzae (strain ATCC 51907 / DSM 11121 / KW20 / Rd)</name>
    <dbReference type="NCBI Taxonomy" id="71421"/>
    <lineage>
        <taxon>Bacteria</taxon>
        <taxon>Pseudomonadati</taxon>
        <taxon>Pseudomonadota</taxon>
        <taxon>Gammaproteobacteria</taxon>
        <taxon>Pasteurellales</taxon>
        <taxon>Pasteurellaceae</taxon>
        <taxon>Haemophilus</taxon>
    </lineage>
</organism>
<gene>
    <name type="primary">argR</name>
    <name type="ordered locus">HI_1209</name>
</gene>
<keyword id="KW-0028">Amino-acid biosynthesis</keyword>
<keyword id="KW-0055">Arginine biosynthesis</keyword>
<keyword id="KW-0963">Cytoplasm</keyword>
<keyword id="KW-0238">DNA-binding</keyword>
<keyword id="KW-1185">Reference proteome</keyword>
<keyword id="KW-0678">Repressor</keyword>
<keyword id="KW-0804">Transcription</keyword>
<keyword id="KW-0805">Transcription regulation</keyword>
<feature type="chain" id="PRO_0000205093" description="Arginine repressor">
    <location>
        <begin position="1"/>
        <end position="151"/>
    </location>
</feature>
<proteinExistence type="inferred from homology"/>
<accession>P45110</accession>
<reference key="1">
    <citation type="journal article" date="1995" name="Science">
        <title>Whole-genome random sequencing and assembly of Haemophilus influenzae Rd.</title>
        <authorList>
            <person name="Fleischmann R.D."/>
            <person name="Adams M.D."/>
            <person name="White O."/>
            <person name="Clayton R.A."/>
            <person name="Kirkness E.F."/>
            <person name="Kerlavage A.R."/>
            <person name="Bult C.J."/>
            <person name="Tomb J.-F."/>
            <person name="Dougherty B.A."/>
            <person name="Merrick J.M."/>
            <person name="McKenney K."/>
            <person name="Sutton G.G."/>
            <person name="FitzHugh W."/>
            <person name="Fields C.A."/>
            <person name="Gocayne J.D."/>
            <person name="Scott J.D."/>
            <person name="Shirley R."/>
            <person name="Liu L.-I."/>
            <person name="Glodek A."/>
            <person name="Kelley J.M."/>
            <person name="Weidman J.F."/>
            <person name="Phillips C.A."/>
            <person name="Spriggs T."/>
            <person name="Hedblom E."/>
            <person name="Cotton M.D."/>
            <person name="Utterback T.R."/>
            <person name="Hanna M.C."/>
            <person name="Nguyen D.T."/>
            <person name="Saudek D.M."/>
            <person name="Brandon R.C."/>
            <person name="Fine L.D."/>
            <person name="Fritchman J.L."/>
            <person name="Fuhrmann J.L."/>
            <person name="Geoghagen N.S.M."/>
            <person name="Gnehm C.L."/>
            <person name="McDonald L.A."/>
            <person name="Small K.V."/>
            <person name="Fraser C.M."/>
            <person name="Smith H.O."/>
            <person name="Venter J.C."/>
        </authorList>
    </citation>
    <scope>NUCLEOTIDE SEQUENCE [LARGE SCALE GENOMIC DNA]</scope>
    <source>
        <strain>ATCC 51907 / DSM 11121 / KW20 / Rd</strain>
    </source>
</reference>
<comment type="function">
    <text evidence="1">Regulates arginine biosynthesis genes.</text>
</comment>
<comment type="pathway">
    <text>Amino-acid biosynthesis; L-arginine biosynthesis [regulation].</text>
</comment>
<comment type="subunit">
    <text evidence="1">Homohexamer.</text>
</comment>
<comment type="subcellular location">
    <subcellularLocation>
        <location evidence="1">Cytoplasm</location>
    </subcellularLocation>
</comment>
<comment type="similarity">
    <text evidence="2">Belongs to the ArgR family.</text>
</comment>
<evidence type="ECO:0000250" key="1"/>
<evidence type="ECO:0000305" key="2"/>
<dbReference type="EMBL" id="L42023">
    <property type="protein sequence ID" value="AAC22863.1"/>
    <property type="molecule type" value="Genomic_DNA"/>
</dbReference>
<dbReference type="PIR" id="B64110">
    <property type="entry name" value="B64110"/>
</dbReference>
<dbReference type="RefSeq" id="NP_439365.1">
    <property type="nucleotide sequence ID" value="NC_000907.1"/>
</dbReference>
<dbReference type="SMR" id="P45110"/>
<dbReference type="STRING" id="71421.HI_1209"/>
<dbReference type="EnsemblBacteria" id="AAC22863">
    <property type="protein sequence ID" value="AAC22863"/>
    <property type="gene ID" value="HI_1209"/>
</dbReference>
<dbReference type="KEGG" id="hin:HI_1209"/>
<dbReference type="PATRIC" id="fig|71421.8.peg.1261"/>
<dbReference type="eggNOG" id="COG1438">
    <property type="taxonomic scope" value="Bacteria"/>
</dbReference>
<dbReference type="HOGENOM" id="CLU_097103_2_0_6"/>
<dbReference type="OrthoDB" id="7060358at2"/>
<dbReference type="PhylomeDB" id="P45110"/>
<dbReference type="BioCyc" id="HINF71421:G1GJ1-1240-MONOMER"/>
<dbReference type="UniPathway" id="UPA00068"/>
<dbReference type="Proteomes" id="UP000000579">
    <property type="component" value="Chromosome"/>
</dbReference>
<dbReference type="GO" id="GO:0005737">
    <property type="term" value="C:cytoplasm"/>
    <property type="evidence" value="ECO:0007669"/>
    <property type="project" value="UniProtKB-SubCell"/>
</dbReference>
<dbReference type="GO" id="GO:0005667">
    <property type="term" value="C:transcription regulator complex"/>
    <property type="evidence" value="ECO:0000318"/>
    <property type="project" value="GO_Central"/>
</dbReference>
<dbReference type="GO" id="GO:0034618">
    <property type="term" value="F:arginine binding"/>
    <property type="evidence" value="ECO:0007669"/>
    <property type="project" value="InterPro"/>
</dbReference>
<dbReference type="GO" id="GO:0000987">
    <property type="term" value="F:cis-regulatory region sequence-specific DNA binding"/>
    <property type="evidence" value="ECO:0000318"/>
    <property type="project" value="GO_Central"/>
</dbReference>
<dbReference type="GO" id="GO:0003700">
    <property type="term" value="F:DNA-binding transcription factor activity"/>
    <property type="evidence" value="ECO:0007669"/>
    <property type="project" value="UniProtKB-UniRule"/>
</dbReference>
<dbReference type="GO" id="GO:0006526">
    <property type="term" value="P:L-arginine biosynthetic process"/>
    <property type="evidence" value="ECO:0007669"/>
    <property type="project" value="UniProtKB-UniPathway"/>
</dbReference>
<dbReference type="GO" id="GO:0051259">
    <property type="term" value="P:protein complex oligomerization"/>
    <property type="evidence" value="ECO:0007669"/>
    <property type="project" value="InterPro"/>
</dbReference>
<dbReference type="GO" id="GO:1900079">
    <property type="term" value="P:regulation of arginine biosynthetic process"/>
    <property type="evidence" value="ECO:0007669"/>
    <property type="project" value="UniProtKB-UniRule"/>
</dbReference>
<dbReference type="GO" id="GO:0000821">
    <property type="term" value="P:regulation of arginine metabolic process"/>
    <property type="evidence" value="ECO:0000318"/>
    <property type="project" value="GO_Central"/>
</dbReference>
<dbReference type="Gene3D" id="3.30.1360.40">
    <property type="match status" value="1"/>
</dbReference>
<dbReference type="Gene3D" id="1.10.10.10">
    <property type="entry name" value="Winged helix-like DNA-binding domain superfamily/Winged helix DNA-binding domain"/>
    <property type="match status" value="1"/>
</dbReference>
<dbReference type="HAMAP" id="MF_00173">
    <property type="entry name" value="Arg_repressor"/>
    <property type="match status" value="1"/>
</dbReference>
<dbReference type="InterPro" id="IPR001669">
    <property type="entry name" value="Arg_repress"/>
</dbReference>
<dbReference type="InterPro" id="IPR020899">
    <property type="entry name" value="Arg_repress_C"/>
</dbReference>
<dbReference type="InterPro" id="IPR036251">
    <property type="entry name" value="Arg_repress_C_sf"/>
</dbReference>
<dbReference type="InterPro" id="IPR020900">
    <property type="entry name" value="Arg_repress_DNA-bd"/>
</dbReference>
<dbReference type="InterPro" id="IPR036388">
    <property type="entry name" value="WH-like_DNA-bd_sf"/>
</dbReference>
<dbReference type="InterPro" id="IPR036390">
    <property type="entry name" value="WH_DNA-bd_sf"/>
</dbReference>
<dbReference type="NCBIfam" id="TIGR01529">
    <property type="entry name" value="argR_whole"/>
    <property type="match status" value="1"/>
</dbReference>
<dbReference type="NCBIfam" id="NF003457">
    <property type="entry name" value="PRK05066.1"/>
    <property type="match status" value="1"/>
</dbReference>
<dbReference type="PANTHER" id="PTHR34471">
    <property type="entry name" value="ARGININE REPRESSOR"/>
    <property type="match status" value="1"/>
</dbReference>
<dbReference type="PANTHER" id="PTHR34471:SF1">
    <property type="entry name" value="ARGININE REPRESSOR"/>
    <property type="match status" value="1"/>
</dbReference>
<dbReference type="Pfam" id="PF01316">
    <property type="entry name" value="Arg_repressor"/>
    <property type="match status" value="1"/>
</dbReference>
<dbReference type="Pfam" id="PF02863">
    <property type="entry name" value="Arg_repressor_C"/>
    <property type="match status" value="1"/>
</dbReference>
<dbReference type="PRINTS" id="PR01467">
    <property type="entry name" value="ARGREPRESSOR"/>
</dbReference>
<dbReference type="SUPFAM" id="SSF55252">
    <property type="entry name" value="C-terminal domain of arginine repressor"/>
    <property type="match status" value="1"/>
</dbReference>
<dbReference type="SUPFAM" id="SSF46785">
    <property type="entry name" value="Winged helix' DNA-binding domain"/>
    <property type="match status" value="1"/>
</dbReference>
<protein>
    <recommendedName>
        <fullName>Arginine repressor</fullName>
    </recommendedName>
</protein>
<sequence>MTENLTRAFKELLNQERFGSQSEIVDALKKQGFTGINQSKISRMLSKFGAVRTRNTKMEMVYCLPNELSVPNTSSPLKNLVLDVDHNAMLIVIKTTPGAAQLIARLLDSIGKSEGILGTIAGDDTIFVTPTNNKPIDELLQNIQRLFENTL</sequence>